<keyword id="KW-0032">Aminotransferase</keyword>
<keyword id="KW-0093">Biotin biosynthesis</keyword>
<keyword id="KW-0663">Pyridoxal phosphate</keyword>
<keyword id="KW-1185">Reference proteome</keyword>
<keyword id="KW-0949">S-adenosyl-L-methionine</keyword>
<keyword id="KW-0808">Transferase</keyword>
<protein>
    <recommendedName>
        <fullName evidence="6">Adenosylmethionine-8-amino-7-oxononanoate aminotransferase</fullName>
        <ecNumber evidence="7">2.6.1.62</ecNumber>
    </recommendedName>
    <alternativeName>
        <fullName evidence="5">7,8-diamino-pelargonic acid aminotransferase</fullName>
        <shortName evidence="5">DAPA AT</shortName>
        <shortName evidence="5">DAPA aminotransferase</shortName>
    </alternativeName>
    <alternativeName>
        <fullName evidence="6">Diaminopelargonic acid synthase</fullName>
    </alternativeName>
</protein>
<reference key="1">
    <citation type="journal article" date="1999" name="Gene">
        <title>Characterization of the biotin biosynthesis pathway in Saccharomyces cerevisiae and evidence for a cluster containing BIO5, a novel gene involved in vitamer uptake.</title>
        <authorList>
            <person name="Phalip V."/>
            <person name="Kuhn I."/>
            <person name="Lemoine Y."/>
            <person name="Jeltsch J.-M."/>
        </authorList>
    </citation>
    <scope>NUCLEOTIDE SEQUENCE [GENOMIC DNA]</scope>
    <scope>FUNCTION</scope>
    <source>
        <strain>ATCC 28383 / FL100 / VTT C-80102</strain>
    </source>
</reference>
<reference key="2">
    <citation type="journal article" date="2005" name="Appl. Environ. Microbiol.">
        <title>Identification and characterization of a novel biotin biosynthesis gene in Saccharomyces cerevisiae.</title>
        <authorList>
            <person name="Wu H."/>
            <person name="Ito K."/>
            <person name="Shimoi H."/>
        </authorList>
    </citation>
    <scope>NUCLEOTIDE SEQUENCE [GENOMIC DNA]</scope>
    <scope>VARIANTS GLU-229; ARG-295 AND ASP-384</scope>
    <source>
        <strain>ATCC 204626 / S288c / A364A</strain>
    </source>
</reference>
<reference key="3">
    <citation type="journal article" date="1997" name="Nature">
        <title>The nucleotide sequence of Saccharomyces cerevisiae chromosome XIV and its evolutionary implications.</title>
        <authorList>
            <person name="Philippsen P."/>
            <person name="Kleine K."/>
            <person name="Poehlmann R."/>
            <person name="Duesterhoeft A."/>
            <person name="Hamberg K."/>
            <person name="Hegemann J.H."/>
            <person name="Obermaier B."/>
            <person name="Urrestarazu L.A."/>
            <person name="Aert R."/>
            <person name="Albermann K."/>
            <person name="Altmann R."/>
            <person name="Andre B."/>
            <person name="Baladron V."/>
            <person name="Ballesta J.P.G."/>
            <person name="Becam A.-M."/>
            <person name="Beinhauer J.D."/>
            <person name="Boskovic J."/>
            <person name="Buitrago M.J."/>
            <person name="Bussereau F."/>
            <person name="Coster F."/>
            <person name="Crouzet M."/>
            <person name="D'Angelo M."/>
            <person name="Dal Pero F."/>
            <person name="De Antoni A."/>
            <person name="del Rey F."/>
            <person name="Doignon F."/>
            <person name="Domdey H."/>
            <person name="Dubois E."/>
            <person name="Fiedler T.A."/>
            <person name="Fleig U."/>
            <person name="Floeth M."/>
            <person name="Fritz C."/>
            <person name="Gaillardin C."/>
            <person name="Garcia-Cantalejo J.M."/>
            <person name="Glansdorff N."/>
            <person name="Goffeau A."/>
            <person name="Gueldener U."/>
            <person name="Herbert C.J."/>
            <person name="Heumann K."/>
            <person name="Heuss-Neitzel D."/>
            <person name="Hilbert H."/>
            <person name="Hinni K."/>
            <person name="Iraqui Houssaini I."/>
            <person name="Jacquet M."/>
            <person name="Jimenez A."/>
            <person name="Jonniaux J.-L."/>
            <person name="Karpfinger-Hartl L."/>
            <person name="Lanfranchi G."/>
            <person name="Lepingle A."/>
            <person name="Levesque H."/>
            <person name="Lyck R."/>
            <person name="Maftahi M."/>
            <person name="Mallet L."/>
            <person name="Maurer C.T.C."/>
            <person name="Messenguy F."/>
            <person name="Mewes H.-W."/>
            <person name="Moestl D."/>
            <person name="Nasr F."/>
            <person name="Nicaud J.-M."/>
            <person name="Niedenthal R.K."/>
            <person name="Pandolfo D."/>
            <person name="Pierard A."/>
            <person name="Piravandi E."/>
            <person name="Planta R.J."/>
            <person name="Pohl T.M."/>
            <person name="Purnelle B."/>
            <person name="Rebischung C."/>
            <person name="Remacha M.A."/>
            <person name="Revuelta J.L."/>
            <person name="Rinke M."/>
            <person name="Saiz J.E."/>
            <person name="Sartorello F."/>
            <person name="Scherens B."/>
            <person name="Sen-Gupta M."/>
            <person name="Soler-Mira A."/>
            <person name="Urbanus J.H.M."/>
            <person name="Valle G."/>
            <person name="Van Dyck L."/>
            <person name="Verhasselt P."/>
            <person name="Vierendeels F."/>
            <person name="Vissers S."/>
            <person name="Voet M."/>
            <person name="Volckaert G."/>
            <person name="Wach A."/>
            <person name="Wambutt R."/>
            <person name="Wedler H."/>
            <person name="Zollner A."/>
            <person name="Hani J."/>
        </authorList>
    </citation>
    <scope>NUCLEOTIDE SEQUENCE [LARGE SCALE GENOMIC DNA]</scope>
    <source>
        <strain>ATCC 204508 / S288c</strain>
    </source>
</reference>
<reference key="4">
    <citation type="journal article" date="2014" name="G3 (Bethesda)">
        <title>The reference genome sequence of Saccharomyces cerevisiae: Then and now.</title>
        <authorList>
            <person name="Engel S.R."/>
            <person name="Dietrich F.S."/>
            <person name="Fisk D.G."/>
            <person name="Binkley G."/>
            <person name="Balakrishnan R."/>
            <person name="Costanzo M.C."/>
            <person name="Dwight S.S."/>
            <person name="Hitz B.C."/>
            <person name="Karra K."/>
            <person name="Nash R.S."/>
            <person name="Weng S."/>
            <person name="Wong E.D."/>
            <person name="Lloyd P."/>
            <person name="Skrzypek M.S."/>
            <person name="Miyasato S.R."/>
            <person name="Simison M."/>
            <person name="Cherry J.M."/>
        </authorList>
    </citation>
    <scope>GENOME REANNOTATION</scope>
    <source>
        <strain>ATCC 204508 / S288c</strain>
    </source>
</reference>
<reference key="5">
    <citation type="journal article" date="2007" name="Genome Res.">
        <title>Approaching a complete repository of sequence-verified protein-encoding clones for Saccharomyces cerevisiae.</title>
        <authorList>
            <person name="Hu Y."/>
            <person name="Rolfs A."/>
            <person name="Bhullar B."/>
            <person name="Murthy T.V.S."/>
            <person name="Zhu C."/>
            <person name="Berger M.F."/>
            <person name="Camargo A.A."/>
            <person name="Kelley F."/>
            <person name="McCarron S."/>
            <person name="Jepson D."/>
            <person name="Richardson A."/>
            <person name="Raphael J."/>
            <person name="Moreira D."/>
            <person name="Taycher E."/>
            <person name="Zuo D."/>
            <person name="Mohr S."/>
            <person name="Kane M.F."/>
            <person name="Williamson J."/>
            <person name="Simpson A.J.G."/>
            <person name="Bulyk M.L."/>
            <person name="Harlow E."/>
            <person name="Marsischky G."/>
            <person name="Kolodner R.D."/>
            <person name="LaBaer J."/>
        </authorList>
    </citation>
    <scope>NUCLEOTIDE SEQUENCE [GENOMIC DNA]</scope>
    <source>
        <strain>ATCC 204508 / S288c</strain>
    </source>
</reference>
<feature type="chain" id="PRO_0000120378" description="Adenosylmethionine-8-amino-7-oxononanoate aminotransferase">
    <location>
        <begin position="1"/>
        <end position="480"/>
    </location>
</feature>
<feature type="binding site" evidence="2">
    <location>
        <begin position="126"/>
        <end position="127"/>
    </location>
    <ligand>
        <name>pyridoxal 5'-phosphate</name>
        <dbReference type="ChEBI" id="CHEBI:597326"/>
    </ligand>
</feature>
<feature type="binding site" evidence="2">
    <location>
        <position position="160"/>
    </location>
    <ligand>
        <name>substrate</name>
    </ligand>
</feature>
<feature type="binding site" evidence="1">
    <location>
        <position position="270"/>
    </location>
    <ligand>
        <name>pyridoxal 5'-phosphate</name>
        <dbReference type="ChEBI" id="CHEBI:597326"/>
    </ligand>
</feature>
<feature type="binding site" evidence="2">
    <location>
        <position position="350"/>
    </location>
    <ligand>
        <name>substrate</name>
    </ligand>
</feature>
<feature type="binding site" evidence="2">
    <location>
        <begin position="351"/>
        <end position="352"/>
    </location>
    <ligand>
        <name>pyridoxal 5'-phosphate</name>
        <dbReference type="ChEBI" id="CHEBI:597326"/>
    </ligand>
</feature>
<feature type="binding site" evidence="2">
    <location>
        <position position="441"/>
    </location>
    <ligand>
        <name>substrate</name>
    </ligand>
</feature>
<feature type="modified residue" description="N6-(pyridoxal phosphate)lysine" evidence="2">
    <location>
        <position position="314"/>
    </location>
</feature>
<feature type="sequence variant" description="In strain: ATCC 28383 and ATCC 204626." evidence="4">
    <original>K</original>
    <variation>E</variation>
    <location>
        <position position="229"/>
    </location>
</feature>
<feature type="sequence variant" description="In strain: ATCC 28383 and ATCC 204626." evidence="4">
    <original>H</original>
    <variation>R</variation>
    <location>
        <position position="295"/>
    </location>
</feature>
<feature type="sequence variant" description="In strain: ATCC 28383 and ATCC 204626." evidence="4">
    <original>N</original>
    <variation>D</variation>
    <location>
        <position position="384"/>
    </location>
</feature>
<feature type="sequence conflict" description="In Ref. 5; AAU09779." evidence="6" ref="5">
    <original>S</original>
    <variation>P</variation>
    <location>
        <position position="140"/>
    </location>
</feature>
<evidence type="ECO:0000250" key="1">
    <source>
        <dbReference type="UniProtKB" id="P12995"/>
    </source>
</evidence>
<evidence type="ECO:0000250" key="2">
    <source>
        <dbReference type="UniProtKB" id="P53555"/>
    </source>
</evidence>
<evidence type="ECO:0000269" key="3">
    <source>
    </source>
</evidence>
<evidence type="ECO:0000269" key="4">
    <source>
    </source>
</evidence>
<evidence type="ECO:0000303" key="5">
    <source>
    </source>
</evidence>
<evidence type="ECO:0000305" key="6"/>
<evidence type="ECO:0000305" key="7">
    <source>
    </source>
</evidence>
<sequence length="480" mass="53709">MSQEISYTPDVAELLDFDKKHIWHPYTSLSSPLNVYPVKSAHGCKLVLDTDSPVDVEVIDAMSSWWCVIHGYNNPELNEALTKQMLKFSHVLLGGFTHKGAVNLVQKLLKVIDEPSLQYCFLADSGSVAVEVALKMALQSNMSGEATKNRTKFLTIKNGYHGDTFGAMSVCDPENSMHHIYNDRLSENIFAQAPSIVDGLPTSQNGFEDHWNAEEVTDLKKQFELHSDKICAVILEPILQGAGGLRPYHPQFLIEVQKLCNQYDVLFIMDEIATGFGRTGEIFAFKHCQKYQDQHGISPSDQIKVVPDILCVGKGLTSGYMTMSAVVVNDKVASRISSPNSPTGGCFMHGPTFMGNALACSVAEKSMDILLRGEWRKQVSAIENQIYRELYQYIKNPDNGLIGTVVKRVSVIGAVGIVELYKKTDPEWFQKKFISKGVHIRPFNCLCYIMPPYVITTEELTKVNQVLIEVLHEWKSHINQ</sequence>
<name>BIOA_YEAST</name>
<dbReference type="EC" id="2.6.1.62" evidence="7"/>
<dbReference type="EMBL" id="U47112">
    <property type="protein sequence ID" value="AAA88905.1"/>
    <property type="molecule type" value="Genomic_DNA"/>
</dbReference>
<dbReference type="EMBL" id="U53467">
    <property type="protein sequence ID" value="AAB63970.1"/>
    <property type="molecule type" value="Genomic_DNA"/>
</dbReference>
<dbReference type="EMBL" id="AB200248">
    <property type="protein sequence ID" value="BAE00005.1"/>
    <property type="molecule type" value="Genomic_DNA"/>
</dbReference>
<dbReference type="EMBL" id="Z71673">
    <property type="protein sequence ID" value="CAA96340.1"/>
    <property type="molecule type" value="Genomic_DNA"/>
</dbReference>
<dbReference type="EMBL" id="AY723862">
    <property type="protein sequence ID" value="AAU09779.1"/>
    <property type="molecule type" value="Genomic_DNA"/>
</dbReference>
<dbReference type="EMBL" id="BK006947">
    <property type="protein sequence ID" value="DAA10599.1"/>
    <property type="molecule type" value="Genomic_DNA"/>
</dbReference>
<dbReference type="PIR" id="S63390">
    <property type="entry name" value="S63390"/>
</dbReference>
<dbReference type="RefSeq" id="NP_014456.1">
    <property type="nucleotide sequence ID" value="NM_001183235.1"/>
</dbReference>
<dbReference type="SMR" id="P50277"/>
<dbReference type="BioGRID" id="35884">
    <property type="interactions" value="25"/>
</dbReference>
<dbReference type="DIP" id="DIP-4822N"/>
<dbReference type="FunCoup" id="P50277">
    <property type="interactions" value="308"/>
</dbReference>
<dbReference type="IntAct" id="P50277">
    <property type="interactions" value="5"/>
</dbReference>
<dbReference type="MINT" id="P50277"/>
<dbReference type="STRING" id="4932.YNR058W"/>
<dbReference type="iPTMnet" id="P50277"/>
<dbReference type="PaxDb" id="4932-YNR058W"/>
<dbReference type="PeptideAtlas" id="P50277"/>
<dbReference type="EnsemblFungi" id="YNR058W_mRNA">
    <property type="protein sequence ID" value="YNR058W"/>
    <property type="gene ID" value="YNR058W"/>
</dbReference>
<dbReference type="GeneID" id="855795"/>
<dbReference type="KEGG" id="sce:YNR058W"/>
<dbReference type="AGR" id="SGD:S000005341"/>
<dbReference type="SGD" id="S000005341">
    <property type="gene designation" value="BIO3"/>
</dbReference>
<dbReference type="VEuPathDB" id="FungiDB:YNR058W"/>
<dbReference type="eggNOG" id="KOG1401">
    <property type="taxonomic scope" value="Eukaryota"/>
</dbReference>
<dbReference type="GeneTree" id="ENSGT00940000176655"/>
<dbReference type="HOGENOM" id="CLU_016922_4_3_1"/>
<dbReference type="InParanoid" id="P50277"/>
<dbReference type="OMA" id="GGCFMHG"/>
<dbReference type="OrthoDB" id="425114at2759"/>
<dbReference type="BioCyc" id="YEAST:YNR058W-MONOMER"/>
<dbReference type="UniPathway" id="UPA00078">
    <property type="reaction ID" value="UER00160"/>
</dbReference>
<dbReference type="BioGRID-ORCS" id="855795">
    <property type="hits" value="1 hit in 10 CRISPR screens"/>
</dbReference>
<dbReference type="CD-CODE" id="E03F929F">
    <property type="entry name" value="Stress granule"/>
</dbReference>
<dbReference type="PRO" id="PR:P50277"/>
<dbReference type="Proteomes" id="UP000002311">
    <property type="component" value="Chromosome XIV"/>
</dbReference>
<dbReference type="RNAct" id="P50277">
    <property type="molecule type" value="protein"/>
</dbReference>
<dbReference type="GO" id="GO:0005739">
    <property type="term" value="C:mitochondrion"/>
    <property type="evidence" value="ECO:0000318"/>
    <property type="project" value="GO_Central"/>
</dbReference>
<dbReference type="GO" id="GO:0004015">
    <property type="term" value="F:adenosylmethionine-8-amino-7-oxononanoate transaminase activity"/>
    <property type="evidence" value="ECO:0000314"/>
    <property type="project" value="SGD"/>
</dbReference>
<dbReference type="GO" id="GO:0004141">
    <property type="term" value="F:dethiobiotin synthase activity"/>
    <property type="evidence" value="ECO:0000318"/>
    <property type="project" value="GO_Central"/>
</dbReference>
<dbReference type="GO" id="GO:0030170">
    <property type="term" value="F:pyridoxal phosphate binding"/>
    <property type="evidence" value="ECO:0007669"/>
    <property type="project" value="InterPro"/>
</dbReference>
<dbReference type="GO" id="GO:0009102">
    <property type="term" value="P:biotin biosynthetic process"/>
    <property type="evidence" value="ECO:0000314"/>
    <property type="project" value="SGD"/>
</dbReference>
<dbReference type="CDD" id="cd00610">
    <property type="entry name" value="OAT_like"/>
    <property type="match status" value="1"/>
</dbReference>
<dbReference type="FunFam" id="3.40.640.10:FF:000151">
    <property type="entry name" value="Adenosylmethionine-8-amino-7-oxononanoate aminotransferase"/>
    <property type="match status" value="1"/>
</dbReference>
<dbReference type="Gene3D" id="3.90.1150.10">
    <property type="entry name" value="Aspartate Aminotransferase, domain 1"/>
    <property type="match status" value="1"/>
</dbReference>
<dbReference type="Gene3D" id="3.40.640.10">
    <property type="entry name" value="Type I PLP-dependent aspartate aminotransferase-like (Major domain)"/>
    <property type="match status" value="1"/>
</dbReference>
<dbReference type="HAMAP" id="MF_00834">
    <property type="entry name" value="BioA"/>
    <property type="match status" value="1"/>
</dbReference>
<dbReference type="InterPro" id="IPR005814">
    <property type="entry name" value="Aminotrans_3"/>
</dbReference>
<dbReference type="InterPro" id="IPR005815">
    <property type="entry name" value="BioA"/>
</dbReference>
<dbReference type="InterPro" id="IPR015424">
    <property type="entry name" value="PyrdxlP-dep_Trfase"/>
</dbReference>
<dbReference type="InterPro" id="IPR015421">
    <property type="entry name" value="PyrdxlP-dep_Trfase_major"/>
</dbReference>
<dbReference type="InterPro" id="IPR015422">
    <property type="entry name" value="PyrdxlP-dep_Trfase_small"/>
</dbReference>
<dbReference type="NCBIfam" id="TIGR00508">
    <property type="entry name" value="bioA"/>
    <property type="match status" value="1"/>
</dbReference>
<dbReference type="PANTHER" id="PTHR42684">
    <property type="entry name" value="ADENOSYLMETHIONINE-8-AMINO-7-OXONONANOATE AMINOTRANSFERASE"/>
    <property type="match status" value="1"/>
</dbReference>
<dbReference type="PANTHER" id="PTHR42684:SF3">
    <property type="entry name" value="ADENOSYLMETHIONINE-8-AMINO-7-OXONONANOATE AMINOTRANSFERASE"/>
    <property type="match status" value="1"/>
</dbReference>
<dbReference type="Pfam" id="PF00202">
    <property type="entry name" value="Aminotran_3"/>
    <property type="match status" value="1"/>
</dbReference>
<dbReference type="SUPFAM" id="SSF53383">
    <property type="entry name" value="PLP-dependent transferases"/>
    <property type="match status" value="1"/>
</dbReference>
<accession>P50277</accession>
<accession>D6W1N3</accession>
<accession>E9P967</accession>
<accession>Q4R1J0</accession>
<proteinExistence type="inferred from homology"/>
<organism>
    <name type="scientific">Saccharomyces cerevisiae (strain ATCC 204508 / S288c)</name>
    <name type="common">Baker's yeast</name>
    <dbReference type="NCBI Taxonomy" id="559292"/>
    <lineage>
        <taxon>Eukaryota</taxon>
        <taxon>Fungi</taxon>
        <taxon>Dikarya</taxon>
        <taxon>Ascomycota</taxon>
        <taxon>Saccharomycotina</taxon>
        <taxon>Saccharomycetes</taxon>
        <taxon>Saccharomycetales</taxon>
        <taxon>Saccharomycetaceae</taxon>
        <taxon>Saccharomyces</taxon>
    </lineage>
</organism>
<comment type="function">
    <text evidence="3">Catalyzes the transfer of the alpha-amino group from S-adenosyl-L-methionine (SAM) to 7-keto-8-aminopelargonic acid (KAPA) to form 7,8-diaminopelargonic acid (DAPA) (PubMed:10333520). It is the only aminotransferase known to utilize SAM as an amino donor (PubMed:10333520).</text>
</comment>
<comment type="catalytic activity">
    <reaction evidence="7">
        <text>(8S)-8-amino-7-oxononanoate + S-adenosyl-L-methionine = S-adenosyl-4-methylsulfanyl-2-oxobutanoate + (7R,8S)-7,8-diammoniononanoate</text>
        <dbReference type="Rhea" id="RHEA:16861"/>
        <dbReference type="ChEBI" id="CHEBI:16490"/>
        <dbReference type="ChEBI" id="CHEBI:59789"/>
        <dbReference type="ChEBI" id="CHEBI:149468"/>
        <dbReference type="ChEBI" id="CHEBI:149469"/>
        <dbReference type="EC" id="2.6.1.62"/>
    </reaction>
</comment>
<comment type="cofactor">
    <cofactor evidence="2">
        <name>pyridoxal 5'-phosphate</name>
        <dbReference type="ChEBI" id="CHEBI:597326"/>
    </cofactor>
</comment>
<comment type="pathway">
    <text evidence="7">Cofactor biosynthesis; biotin biosynthesis; 7,8-diaminononanoate from 8-amino-7-oxononanoate (SAM route): step 1/1.</text>
</comment>
<comment type="similarity">
    <text evidence="6">Belongs to the class-III pyridoxal-phosphate-dependent aminotransferase family. BioA subfamily.</text>
</comment>
<gene>
    <name evidence="5" type="primary">BIO3</name>
    <name type="ordered locus">YNR058W</name>
    <name type="ORF">N3510</name>
</gene>